<organism>
    <name type="scientific">Bos taurus</name>
    <name type="common">Bovine</name>
    <dbReference type="NCBI Taxonomy" id="9913"/>
    <lineage>
        <taxon>Eukaryota</taxon>
        <taxon>Metazoa</taxon>
        <taxon>Chordata</taxon>
        <taxon>Craniata</taxon>
        <taxon>Vertebrata</taxon>
        <taxon>Euteleostomi</taxon>
        <taxon>Mammalia</taxon>
        <taxon>Eutheria</taxon>
        <taxon>Laurasiatheria</taxon>
        <taxon>Artiodactyla</taxon>
        <taxon>Ruminantia</taxon>
        <taxon>Pecora</taxon>
        <taxon>Bovidae</taxon>
        <taxon>Bovinae</taxon>
        <taxon>Bos</taxon>
    </lineage>
</organism>
<comment type="function">
    <text evidence="1">Non catalytic subunit of RNase H2, an endonuclease that specifically degrades the RNA of RNA:DNA hybrids. Participates in DNA replication, possibly by mediating the removal of lagging-strand Okazaki fragment RNA primers during DNA replication. Mediates the excision of single ribonucleotides from DNA:RNA duplexes (By similarity).</text>
</comment>
<comment type="subunit">
    <text evidence="1">The RNase H2 complex is a heterotrimer composed of the catalytic subunit RNASEH2A and the non-catalytic subunits RNASEH2B and RNASEH2C.</text>
</comment>
<comment type="subcellular location">
    <subcellularLocation>
        <location evidence="1">Nucleus</location>
    </subcellularLocation>
</comment>
<comment type="similarity">
    <text evidence="3">Belongs to the RNase H2 subunit C family.</text>
</comment>
<proteinExistence type="evidence at transcript level"/>
<keyword id="KW-0007">Acetylation</keyword>
<keyword id="KW-0539">Nucleus</keyword>
<keyword id="KW-1185">Reference proteome</keyword>
<accession>Q2M2U4</accession>
<gene>
    <name type="primary">RNASEH2C</name>
</gene>
<sequence>MENSYEETIDKRRVHLRPDTLRDPAPASLHLLPCEVPVNRPTPVGRFFTPAIRMGRDGLEASFRGRSLRGEEVVVPPGFVGYVVTEEKAEVLMGKQDDHERQEQELLEPPEALERDCDRFMGATASFSSFTVWGLESIPGPDAKLRGALSWPSLAAAIHAQVPED</sequence>
<protein>
    <recommendedName>
        <fullName>Ribonuclease H2 subunit C</fullName>
        <shortName>RNase H2 subunit C</shortName>
    </recommendedName>
    <alternativeName>
        <fullName>Ribonuclease HI subunit C</fullName>
    </alternativeName>
</protein>
<reference key="1">
    <citation type="submission" date="2006-01" db="EMBL/GenBank/DDBJ databases">
        <authorList>
            <consortium name="NIH - Mammalian Gene Collection (MGC) project"/>
        </authorList>
    </citation>
    <scope>NUCLEOTIDE SEQUENCE [LARGE SCALE MRNA]</scope>
    <source>
        <strain>Hereford</strain>
        <tissue>Testis</tissue>
    </source>
</reference>
<dbReference type="EMBL" id="BC111611">
    <property type="protein sequence ID" value="AAI11612.1"/>
    <property type="molecule type" value="mRNA"/>
</dbReference>
<dbReference type="RefSeq" id="NP_001039386.1">
    <property type="nucleotide sequence ID" value="NM_001045921.1"/>
</dbReference>
<dbReference type="SMR" id="Q2M2U4"/>
<dbReference type="FunCoup" id="Q2M2U4">
    <property type="interactions" value="1047"/>
</dbReference>
<dbReference type="STRING" id="9913.ENSBTAP00000007327"/>
<dbReference type="PaxDb" id="9913-ENSBTAP00000007327"/>
<dbReference type="Ensembl" id="ENSBTAT00000007327.5">
    <property type="protein sequence ID" value="ENSBTAP00000007327.3"/>
    <property type="gene ID" value="ENSBTAG00000005577.5"/>
</dbReference>
<dbReference type="GeneID" id="505618"/>
<dbReference type="KEGG" id="bta:505618"/>
<dbReference type="CTD" id="84153"/>
<dbReference type="VEuPathDB" id="HostDB:ENSBTAG00000005577"/>
<dbReference type="VGNC" id="VGNC:34001">
    <property type="gene designation" value="RNASEH2C"/>
</dbReference>
<dbReference type="eggNOG" id="ENOG502SBKV">
    <property type="taxonomic scope" value="Eukaryota"/>
</dbReference>
<dbReference type="GeneTree" id="ENSGT00390000001568"/>
<dbReference type="HOGENOM" id="CLU_097632_3_0_1"/>
<dbReference type="InParanoid" id="Q2M2U4"/>
<dbReference type="OMA" id="FDQFIGA"/>
<dbReference type="OrthoDB" id="6222486at2759"/>
<dbReference type="TreeFam" id="TF324370"/>
<dbReference type="Proteomes" id="UP000009136">
    <property type="component" value="Chromosome 29"/>
</dbReference>
<dbReference type="Bgee" id="ENSBTAG00000005577">
    <property type="expression patterns" value="Expressed in laryngeal cartilage and 107 other cell types or tissues"/>
</dbReference>
<dbReference type="GO" id="GO:0005634">
    <property type="term" value="C:nucleus"/>
    <property type="evidence" value="ECO:0007669"/>
    <property type="project" value="UniProtKB-SubCell"/>
</dbReference>
<dbReference type="GO" id="GO:0032299">
    <property type="term" value="C:ribonuclease H2 complex"/>
    <property type="evidence" value="ECO:0000250"/>
    <property type="project" value="UniProtKB"/>
</dbReference>
<dbReference type="GO" id="GO:0006401">
    <property type="term" value="P:RNA catabolic process"/>
    <property type="evidence" value="ECO:0000250"/>
    <property type="project" value="UniProtKB"/>
</dbReference>
<dbReference type="CDD" id="cd09271">
    <property type="entry name" value="RNase_H2-C"/>
    <property type="match status" value="1"/>
</dbReference>
<dbReference type="Gene3D" id="2.40.128.680">
    <property type="match status" value="1"/>
</dbReference>
<dbReference type="InterPro" id="IPR052863">
    <property type="entry name" value="RNase_H2_subunit_C"/>
</dbReference>
<dbReference type="InterPro" id="IPR013924">
    <property type="entry name" value="RNase_H2_suC"/>
</dbReference>
<dbReference type="PANTHER" id="PTHR47063">
    <property type="entry name" value="RIBONUCLEASE H2 SUBUNIT C"/>
    <property type="match status" value="1"/>
</dbReference>
<dbReference type="PANTHER" id="PTHR47063:SF1">
    <property type="entry name" value="RIBONUCLEASE H2 SUBUNIT C"/>
    <property type="match status" value="1"/>
</dbReference>
<dbReference type="Pfam" id="PF08615">
    <property type="entry name" value="RNase_H2_suC"/>
    <property type="match status" value="1"/>
</dbReference>
<evidence type="ECO:0000250" key="1"/>
<evidence type="ECO:0000250" key="2">
    <source>
        <dbReference type="UniProtKB" id="Q8TDP1"/>
    </source>
</evidence>
<evidence type="ECO:0000305" key="3"/>
<feature type="chain" id="PRO_0000248384" description="Ribonuclease H2 subunit C">
    <location>
        <begin position="1"/>
        <end position="165"/>
    </location>
</feature>
<feature type="modified residue" description="N-acetylmethionine" evidence="2">
    <location>
        <position position="1"/>
    </location>
</feature>
<name>RNH2C_BOVIN</name>